<reference key="1">
    <citation type="submission" date="2002-03" db="EMBL/GenBank/DDBJ databases">
        <title>Identification of genes in the chromosome X that are differentially expressed in hepatocellular carcinoma.</title>
        <authorList>
            <person name="Dong X.-Y."/>
            <person name="Chen W.-F."/>
        </authorList>
    </citation>
    <scope>NUCLEOTIDE SEQUENCE [MRNA]</scope>
</reference>
<reference key="2">
    <citation type="journal article" date="2000" name="DNA Res.">
        <title>Prediction of the coding sequences of unidentified human genes. XVIII. The complete sequences of 100 new cDNA clones from brain which code for large proteins in vitro.</title>
        <authorList>
            <person name="Nagase T."/>
            <person name="Kikuno R."/>
            <person name="Nakayama M."/>
            <person name="Hirosawa M."/>
            <person name="Ohara O."/>
        </authorList>
    </citation>
    <scope>NUCLEOTIDE SEQUENCE [LARGE SCALE MRNA]</scope>
    <source>
        <tissue>Brain</tissue>
    </source>
</reference>
<reference key="3">
    <citation type="journal article" date="2004" name="Nat. Genet.">
        <title>Complete sequencing and characterization of 21,243 full-length human cDNAs.</title>
        <authorList>
            <person name="Ota T."/>
            <person name="Suzuki Y."/>
            <person name="Nishikawa T."/>
            <person name="Otsuki T."/>
            <person name="Sugiyama T."/>
            <person name="Irie R."/>
            <person name="Wakamatsu A."/>
            <person name="Hayashi K."/>
            <person name="Sato H."/>
            <person name="Nagai K."/>
            <person name="Kimura K."/>
            <person name="Makita H."/>
            <person name="Sekine M."/>
            <person name="Obayashi M."/>
            <person name="Nishi T."/>
            <person name="Shibahara T."/>
            <person name="Tanaka T."/>
            <person name="Ishii S."/>
            <person name="Yamamoto J."/>
            <person name="Saito K."/>
            <person name="Kawai Y."/>
            <person name="Isono Y."/>
            <person name="Nakamura Y."/>
            <person name="Nagahari K."/>
            <person name="Murakami K."/>
            <person name="Yasuda T."/>
            <person name="Iwayanagi T."/>
            <person name="Wagatsuma M."/>
            <person name="Shiratori A."/>
            <person name="Sudo H."/>
            <person name="Hosoiri T."/>
            <person name="Kaku Y."/>
            <person name="Kodaira H."/>
            <person name="Kondo H."/>
            <person name="Sugawara M."/>
            <person name="Takahashi M."/>
            <person name="Kanda K."/>
            <person name="Yokoi T."/>
            <person name="Furuya T."/>
            <person name="Kikkawa E."/>
            <person name="Omura Y."/>
            <person name="Abe K."/>
            <person name="Kamihara K."/>
            <person name="Katsuta N."/>
            <person name="Sato K."/>
            <person name="Tanikawa M."/>
            <person name="Yamazaki M."/>
            <person name="Ninomiya K."/>
            <person name="Ishibashi T."/>
            <person name="Yamashita H."/>
            <person name="Murakawa K."/>
            <person name="Fujimori K."/>
            <person name="Tanai H."/>
            <person name="Kimata M."/>
            <person name="Watanabe M."/>
            <person name="Hiraoka S."/>
            <person name="Chiba Y."/>
            <person name="Ishida S."/>
            <person name="Ono Y."/>
            <person name="Takiguchi S."/>
            <person name="Watanabe S."/>
            <person name="Yosida M."/>
            <person name="Hotuta T."/>
            <person name="Kusano J."/>
            <person name="Kanehori K."/>
            <person name="Takahashi-Fujii A."/>
            <person name="Hara H."/>
            <person name="Tanase T.-O."/>
            <person name="Nomura Y."/>
            <person name="Togiya S."/>
            <person name="Komai F."/>
            <person name="Hara R."/>
            <person name="Takeuchi K."/>
            <person name="Arita M."/>
            <person name="Imose N."/>
            <person name="Musashino K."/>
            <person name="Yuuki H."/>
            <person name="Oshima A."/>
            <person name="Sasaki N."/>
            <person name="Aotsuka S."/>
            <person name="Yoshikawa Y."/>
            <person name="Matsunawa H."/>
            <person name="Ichihara T."/>
            <person name="Shiohata N."/>
            <person name="Sano S."/>
            <person name="Moriya S."/>
            <person name="Momiyama H."/>
            <person name="Satoh N."/>
            <person name="Takami S."/>
            <person name="Terashima Y."/>
            <person name="Suzuki O."/>
            <person name="Nakagawa S."/>
            <person name="Senoh A."/>
            <person name="Mizoguchi H."/>
            <person name="Goto Y."/>
            <person name="Shimizu F."/>
            <person name="Wakebe H."/>
            <person name="Hishigaki H."/>
            <person name="Watanabe T."/>
            <person name="Sugiyama A."/>
            <person name="Takemoto M."/>
            <person name="Kawakami B."/>
            <person name="Yamazaki M."/>
            <person name="Watanabe K."/>
            <person name="Kumagai A."/>
            <person name="Itakura S."/>
            <person name="Fukuzumi Y."/>
            <person name="Fujimori Y."/>
            <person name="Komiyama M."/>
            <person name="Tashiro H."/>
            <person name="Tanigami A."/>
            <person name="Fujiwara T."/>
            <person name="Ono T."/>
            <person name="Yamada K."/>
            <person name="Fujii Y."/>
            <person name="Ozaki K."/>
            <person name="Hirao M."/>
            <person name="Ohmori Y."/>
            <person name="Kawabata A."/>
            <person name="Hikiji T."/>
            <person name="Kobatake N."/>
            <person name="Inagaki H."/>
            <person name="Ikema Y."/>
            <person name="Okamoto S."/>
            <person name="Okitani R."/>
            <person name="Kawakami T."/>
            <person name="Noguchi S."/>
            <person name="Itoh T."/>
            <person name="Shigeta K."/>
            <person name="Senba T."/>
            <person name="Matsumura K."/>
            <person name="Nakajima Y."/>
            <person name="Mizuno T."/>
            <person name="Morinaga M."/>
            <person name="Sasaki M."/>
            <person name="Togashi T."/>
            <person name="Oyama M."/>
            <person name="Hata H."/>
            <person name="Watanabe M."/>
            <person name="Komatsu T."/>
            <person name="Mizushima-Sugano J."/>
            <person name="Satoh T."/>
            <person name="Shirai Y."/>
            <person name="Takahashi Y."/>
            <person name="Nakagawa K."/>
            <person name="Okumura K."/>
            <person name="Nagase T."/>
            <person name="Nomura N."/>
            <person name="Kikuchi H."/>
            <person name="Masuho Y."/>
            <person name="Yamashita R."/>
            <person name="Nakai K."/>
            <person name="Yada T."/>
            <person name="Nakamura Y."/>
            <person name="Ohara O."/>
            <person name="Isogai T."/>
            <person name="Sugano S."/>
        </authorList>
    </citation>
    <scope>NUCLEOTIDE SEQUENCE [LARGE SCALE MRNA]</scope>
</reference>
<reference key="4">
    <citation type="submission" date="2005-09" db="EMBL/GenBank/DDBJ databases">
        <authorList>
            <person name="Mural R.J."/>
            <person name="Istrail S."/>
            <person name="Sutton G."/>
            <person name="Florea L."/>
            <person name="Halpern A.L."/>
            <person name="Mobarry C.M."/>
            <person name="Lippert R."/>
            <person name="Walenz B."/>
            <person name="Shatkay H."/>
            <person name="Dew I."/>
            <person name="Miller J.R."/>
            <person name="Flanigan M.J."/>
            <person name="Edwards N.J."/>
            <person name="Bolanos R."/>
            <person name="Fasulo D."/>
            <person name="Halldorsson B.V."/>
            <person name="Hannenhalli S."/>
            <person name="Turner R."/>
            <person name="Yooseph S."/>
            <person name="Lu F."/>
            <person name="Nusskern D.R."/>
            <person name="Shue B.C."/>
            <person name="Zheng X.H."/>
            <person name="Zhong F."/>
            <person name="Delcher A.L."/>
            <person name="Huson D.H."/>
            <person name="Kravitz S.A."/>
            <person name="Mouchard L."/>
            <person name="Reinert K."/>
            <person name="Remington K.A."/>
            <person name="Clark A.G."/>
            <person name="Waterman M.S."/>
            <person name="Eichler E.E."/>
            <person name="Adams M.D."/>
            <person name="Hunkapiller M.W."/>
            <person name="Myers E.W."/>
            <person name="Venter J.C."/>
        </authorList>
    </citation>
    <scope>NUCLEOTIDE SEQUENCE [LARGE SCALE GENOMIC DNA]</scope>
</reference>
<reference key="5">
    <citation type="journal article" date="2005" name="Nature">
        <title>The DNA sequence of the human X chromosome.</title>
        <authorList>
            <person name="Ross M.T."/>
            <person name="Grafham D.V."/>
            <person name="Coffey A.J."/>
            <person name="Scherer S."/>
            <person name="McLay K."/>
            <person name="Muzny D."/>
            <person name="Platzer M."/>
            <person name="Howell G.R."/>
            <person name="Burrows C."/>
            <person name="Bird C.P."/>
            <person name="Frankish A."/>
            <person name="Lovell F.L."/>
            <person name="Howe K.L."/>
            <person name="Ashurst J.L."/>
            <person name="Fulton R.S."/>
            <person name="Sudbrak R."/>
            <person name="Wen G."/>
            <person name="Jones M.C."/>
            <person name="Hurles M.E."/>
            <person name="Andrews T.D."/>
            <person name="Scott C.E."/>
            <person name="Searle S."/>
            <person name="Ramser J."/>
            <person name="Whittaker A."/>
            <person name="Deadman R."/>
            <person name="Carter N.P."/>
            <person name="Hunt S.E."/>
            <person name="Chen R."/>
            <person name="Cree A."/>
            <person name="Gunaratne P."/>
            <person name="Havlak P."/>
            <person name="Hodgson A."/>
            <person name="Metzker M.L."/>
            <person name="Richards S."/>
            <person name="Scott G."/>
            <person name="Steffen D."/>
            <person name="Sodergren E."/>
            <person name="Wheeler D.A."/>
            <person name="Worley K.C."/>
            <person name="Ainscough R."/>
            <person name="Ambrose K.D."/>
            <person name="Ansari-Lari M.A."/>
            <person name="Aradhya S."/>
            <person name="Ashwell R.I."/>
            <person name="Babbage A.K."/>
            <person name="Bagguley C.L."/>
            <person name="Ballabio A."/>
            <person name="Banerjee R."/>
            <person name="Barker G.E."/>
            <person name="Barlow K.F."/>
            <person name="Barrett I.P."/>
            <person name="Bates K.N."/>
            <person name="Beare D.M."/>
            <person name="Beasley H."/>
            <person name="Beasley O."/>
            <person name="Beck A."/>
            <person name="Bethel G."/>
            <person name="Blechschmidt K."/>
            <person name="Brady N."/>
            <person name="Bray-Allen S."/>
            <person name="Bridgeman A.M."/>
            <person name="Brown A.J."/>
            <person name="Brown M.J."/>
            <person name="Bonnin D."/>
            <person name="Bruford E.A."/>
            <person name="Buhay C."/>
            <person name="Burch P."/>
            <person name="Burford D."/>
            <person name="Burgess J."/>
            <person name="Burrill W."/>
            <person name="Burton J."/>
            <person name="Bye J.M."/>
            <person name="Carder C."/>
            <person name="Carrel L."/>
            <person name="Chako J."/>
            <person name="Chapman J.C."/>
            <person name="Chavez D."/>
            <person name="Chen E."/>
            <person name="Chen G."/>
            <person name="Chen Y."/>
            <person name="Chen Z."/>
            <person name="Chinault C."/>
            <person name="Ciccodicola A."/>
            <person name="Clark S.Y."/>
            <person name="Clarke G."/>
            <person name="Clee C.M."/>
            <person name="Clegg S."/>
            <person name="Clerc-Blankenburg K."/>
            <person name="Clifford K."/>
            <person name="Cobley V."/>
            <person name="Cole C.G."/>
            <person name="Conquer J.S."/>
            <person name="Corby N."/>
            <person name="Connor R.E."/>
            <person name="David R."/>
            <person name="Davies J."/>
            <person name="Davis C."/>
            <person name="Davis J."/>
            <person name="Delgado O."/>
            <person name="Deshazo D."/>
            <person name="Dhami P."/>
            <person name="Ding Y."/>
            <person name="Dinh H."/>
            <person name="Dodsworth S."/>
            <person name="Draper H."/>
            <person name="Dugan-Rocha S."/>
            <person name="Dunham A."/>
            <person name="Dunn M."/>
            <person name="Durbin K.J."/>
            <person name="Dutta I."/>
            <person name="Eades T."/>
            <person name="Ellwood M."/>
            <person name="Emery-Cohen A."/>
            <person name="Errington H."/>
            <person name="Evans K.L."/>
            <person name="Faulkner L."/>
            <person name="Francis F."/>
            <person name="Frankland J."/>
            <person name="Fraser A.E."/>
            <person name="Galgoczy P."/>
            <person name="Gilbert J."/>
            <person name="Gill R."/>
            <person name="Gloeckner G."/>
            <person name="Gregory S.G."/>
            <person name="Gribble S."/>
            <person name="Griffiths C."/>
            <person name="Grocock R."/>
            <person name="Gu Y."/>
            <person name="Gwilliam R."/>
            <person name="Hamilton C."/>
            <person name="Hart E.A."/>
            <person name="Hawes A."/>
            <person name="Heath P.D."/>
            <person name="Heitmann K."/>
            <person name="Hennig S."/>
            <person name="Hernandez J."/>
            <person name="Hinzmann B."/>
            <person name="Ho S."/>
            <person name="Hoffs M."/>
            <person name="Howden P.J."/>
            <person name="Huckle E.J."/>
            <person name="Hume J."/>
            <person name="Hunt P.J."/>
            <person name="Hunt A.R."/>
            <person name="Isherwood J."/>
            <person name="Jacob L."/>
            <person name="Johnson D."/>
            <person name="Jones S."/>
            <person name="de Jong P.J."/>
            <person name="Joseph S.S."/>
            <person name="Keenan S."/>
            <person name="Kelly S."/>
            <person name="Kershaw J.K."/>
            <person name="Khan Z."/>
            <person name="Kioschis P."/>
            <person name="Klages S."/>
            <person name="Knights A.J."/>
            <person name="Kosiura A."/>
            <person name="Kovar-Smith C."/>
            <person name="Laird G.K."/>
            <person name="Langford C."/>
            <person name="Lawlor S."/>
            <person name="Leversha M."/>
            <person name="Lewis L."/>
            <person name="Liu W."/>
            <person name="Lloyd C."/>
            <person name="Lloyd D.M."/>
            <person name="Loulseged H."/>
            <person name="Loveland J.E."/>
            <person name="Lovell J.D."/>
            <person name="Lozado R."/>
            <person name="Lu J."/>
            <person name="Lyne R."/>
            <person name="Ma J."/>
            <person name="Maheshwari M."/>
            <person name="Matthews L.H."/>
            <person name="McDowall J."/>
            <person name="McLaren S."/>
            <person name="McMurray A."/>
            <person name="Meidl P."/>
            <person name="Meitinger T."/>
            <person name="Milne S."/>
            <person name="Miner G."/>
            <person name="Mistry S.L."/>
            <person name="Morgan M."/>
            <person name="Morris S."/>
            <person name="Mueller I."/>
            <person name="Mullikin J.C."/>
            <person name="Nguyen N."/>
            <person name="Nordsiek G."/>
            <person name="Nyakatura G."/>
            <person name="O'dell C.N."/>
            <person name="Okwuonu G."/>
            <person name="Palmer S."/>
            <person name="Pandian R."/>
            <person name="Parker D."/>
            <person name="Parrish J."/>
            <person name="Pasternak S."/>
            <person name="Patel D."/>
            <person name="Pearce A.V."/>
            <person name="Pearson D.M."/>
            <person name="Pelan S.E."/>
            <person name="Perez L."/>
            <person name="Porter K.M."/>
            <person name="Ramsey Y."/>
            <person name="Reichwald K."/>
            <person name="Rhodes S."/>
            <person name="Ridler K.A."/>
            <person name="Schlessinger D."/>
            <person name="Schueler M.G."/>
            <person name="Sehra H.K."/>
            <person name="Shaw-Smith C."/>
            <person name="Shen H."/>
            <person name="Sheridan E.M."/>
            <person name="Shownkeen R."/>
            <person name="Skuce C.D."/>
            <person name="Smith M.L."/>
            <person name="Sotheran E.C."/>
            <person name="Steingruber H.E."/>
            <person name="Steward C.A."/>
            <person name="Storey R."/>
            <person name="Swann R.M."/>
            <person name="Swarbreck D."/>
            <person name="Tabor P.E."/>
            <person name="Taudien S."/>
            <person name="Taylor T."/>
            <person name="Teague B."/>
            <person name="Thomas K."/>
            <person name="Thorpe A."/>
            <person name="Timms K."/>
            <person name="Tracey A."/>
            <person name="Trevanion S."/>
            <person name="Tromans A.C."/>
            <person name="d'Urso M."/>
            <person name="Verduzco D."/>
            <person name="Villasana D."/>
            <person name="Waldron L."/>
            <person name="Wall M."/>
            <person name="Wang Q."/>
            <person name="Warren J."/>
            <person name="Warry G.L."/>
            <person name="Wei X."/>
            <person name="West A."/>
            <person name="Whitehead S.L."/>
            <person name="Whiteley M.N."/>
            <person name="Wilkinson J.E."/>
            <person name="Willey D.L."/>
            <person name="Williams G."/>
            <person name="Williams L."/>
            <person name="Williamson A."/>
            <person name="Williamson H."/>
            <person name="Wilming L."/>
            <person name="Woodmansey R.L."/>
            <person name="Wray P.W."/>
            <person name="Yen J."/>
            <person name="Zhang J."/>
            <person name="Zhou J."/>
            <person name="Zoghbi H."/>
            <person name="Zorilla S."/>
            <person name="Buck D."/>
            <person name="Reinhardt R."/>
            <person name="Poustka A."/>
            <person name="Rosenthal A."/>
            <person name="Lehrach H."/>
            <person name="Meindl A."/>
            <person name="Minx P.J."/>
            <person name="Hillier L.W."/>
            <person name="Willard H.F."/>
            <person name="Wilson R.K."/>
            <person name="Waterston R.H."/>
            <person name="Rice C.M."/>
            <person name="Vaudin M."/>
            <person name="Coulson A."/>
            <person name="Nelson D.L."/>
            <person name="Weinstock G."/>
            <person name="Sulston J.E."/>
            <person name="Durbin R.M."/>
            <person name="Hubbard T."/>
            <person name="Gibbs R.A."/>
            <person name="Beck S."/>
            <person name="Rogers J."/>
            <person name="Bentley D.R."/>
        </authorList>
    </citation>
    <scope>NUCLEOTIDE SEQUENCE [LARGE SCALE GENOMIC DNA]</scope>
</reference>
<reference key="6">
    <citation type="journal article" date="2004" name="Genome Res.">
        <title>The status, quality, and expansion of the NIH full-length cDNA project: the Mammalian Gene Collection (MGC).</title>
        <authorList>
            <consortium name="The MGC Project Team"/>
        </authorList>
    </citation>
    <scope>NUCLEOTIDE SEQUENCE [LARGE SCALE MRNA]</scope>
    <scope>VARIANT ASP-339</scope>
    <source>
        <tissue>PNS</tissue>
    </source>
</reference>
<reference key="7">
    <citation type="submission" date="2000-10" db="EMBL/GenBank/DDBJ databases">
        <title>Identification of new genes of the MAGE family.</title>
        <authorList>
            <person name="Lucas S."/>
            <person name="Boon T."/>
        </authorList>
    </citation>
    <scope>NUCLEOTIDE SEQUENCE [MRNA] OF 548-664</scope>
    <source>
        <tissue>Testis</tissue>
    </source>
</reference>
<reference key="8">
    <citation type="journal article" date="2010" name="Mol. Cell">
        <title>MAGE-RING protein complexes comprise a family of E3 ubiquitin ligases.</title>
        <authorList>
            <person name="Doyle J.M."/>
            <person name="Gao J."/>
            <person name="Wang J."/>
            <person name="Yang M."/>
            <person name="Potts P.R."/>
        </authorList>
    </citation>
    <scope>FUNCTION</scope>
    <scope>INTERACTION WITH TRIM28</scope>
</reference>
<reference key="9">
    <citation type="journal article" date="2006" name="Science">
        <title>The consensus coding sequences of human breast and colorectal cancers.</title>
        <authorList>
            <person name="Sjoeblom T."/>
            <person name="Jones S."/>
            <person name="Wood L.D."/>
            <person name="Parsons D.W."/>
            <person name="Lin J."/>
            <person name="Barber T.D."/>
            <person name="Mandelker D."/>
            <person name="Leary R.J."/>
            <person name="Ptak J."/>
            <person name="Silliman N."/>
            <person name="Szabo S."/>
            <person name="Buckhaults P."/>
            <person name="Farrell C."/>
            <person name="Meeh P."/>
            <person name="Markowitz S.D."/>
            <person name="Willis J."/>
            <person name="Dawson D."/>
            <person name="Willson J.K.V."/>
            <person name="Gazdar A.F."/>
            <person name="Hartigan J."/>
            <person name="Wu L."/>
            <person name="Liu C."/>
            <person name="Parmigiani G."/>
            <person name="Park B.H."/>
            <person name="Bachman K.E."/>
            <person name="Papadopoulos N."/>
            <person name="Vogelstein B."/>
            <person name="Kinzler K.W."/>
            <person name="Velculescu V.E."/>
        </authorList>
    </citation>
    <scope>VARIANTS [LARGE SCALE ANALYSIS] PHE-640 AND ASN-664</scope>
</reference>
<reference key="10">
    <citation type="journal article" date="2012" name="Transl. Psychiatry">
        <title>Analysis of the chromosome X exome in patients with autism spectrum disorders identified novel candidate genes, including TMLHE.</title>
        <authorList>
            <person name="Nava C."/>
            <person name="Lamari F."/>
            <person name="Heron D."/>
            <person name="Mignot C."/>
            <person name="Rastetter A."/>
            <person name="Keren B."/>
            <person name="Cohen D."/>
            <person name="Faudet A."/>
            <person name="Bouteiller D."/>
            <person name="Gilleron M."/>
            <person name="Jacquette A."/>
            <person name="Whalen S."/>
            <person name="Afenjar A."/>
            <person name="Perisse D."/>
            <person name="Laurent C."/>
            <person name="Dupuits C."/>
            <person name="Gautier C."/>
            <person name="Gerard M."/>
            <person name="Huguet G."/>
            <person name="Caillet S."/>
            <person name="Leheup B."/>
            <person name="Leboyer M."/>
            <person name="Gillberg C."/>
            <person name="Delorme R."/>
            <person name="Bourgeron T."/>
            <person name="Brice A."/>
            <person name="Depienne C."/>
        </authorList>
    </citation>
    <scope>VARIANT CYS-305</scope>
</reference>
<protein>
    <recommendedName>
        <fullName>Melanoma-associated antigen E1</fullName>
    </recommendedName>
    <alternativeName>
        <fullName>Alpha-dystrobrevin-associated MAGE Protein</fullName>
        <shortName>DAMAGE</shortName>
    </alternativeName>
    <alternativeName>
        <fullName>Hepatocellular carcinoma-associated protein 1</fullName>
    </alternativeName>
    <alternativeName>
        <fullName>MAGE-E1 antigen</fullName>
    </alternativeName>
</protein>
<sequence>MSLVSQNSRRRRRRVAKATAHNSSWGEMQAPNAPGLPADVPGSDVPQGPSDSQILQGLCASEGPSTSVLPTSAEGPSTFVPPTISEASSASGQPTISEGPGTSVLPTPSEGLSTSGPPTISKGLCTSVTLAASEGRNTSRPPTSSEEPSTSVPPTASEVPSTSLPPTPGEGTSTSVPPTAYEGPSTSVVPTPDEGPSTSVLPTPGEGPGTSVPLAATEGLSTSVQATPDEGPSTSVPPTATEGLSTPVPPTRDEGPSTSVPATPGEGPSTSVLPAASDGQSISLVPTRGKGSSTSVPPTATEGLSTSVQPTAGEGSSTSVPPTPGGGLSTSVPPTATEELSTSVPPTPGEGPSTSVLPIPGEGLSTSVPPTASDGSDTSVPPTPGEGASTLVQPTAPDGPGSSVLPNPGEGPSTLFSSSASVDRNPSKCSLVLPSPRVTKASVDSDSEGPKGAEGPIEFEVLRDCESPNSISIMGLNTSRVAITLKPQDPMEQNVAELLQFLLVKDQSKYPIRESEMREYIVKEYRNQFPEILRRAAAHLECIFRFELRELDPEAHTYILLNKLGPVPFEGLEESPNGPKMGLLMMILGQIFLNGNQAKEAEIWEMLWRMGVQRERRLSIFGNPKRLLSVEFVWQRYLDYRPVTDCKPVEYEFFWGPRSHLETTKMKILKFMAKIYNKDPMDWPEKYNEALEEDAARAFAEGWQALPHFRRPFFEEAAAEVPSPDSEVSSYSSKYAPHSWPESRLESKARKLVQLFLLMDSTKLPIPKKGILYYIGRECSKVFPDLLNRAARTLNHVYGTELVVLDPRNHSYTLYNRREMEETEEIVDSPNRPGNNFLMQVLSFIFIMGNHARESAVWAFLRGLGVQAGRKHVITCRYLSQRYIDSLRVPDSDPVQYEFVWGPRARLETSKMKALRYVARIHRKEPQDWPQQYREAMEDEANRADVGHRQIFVHNFR</sequence>
<comment type="function">
    <text evidence="6">May enhance ubiquitin ligase activity of RING-type zinc finger-containing E3 ubiquitin-protein ligases. Proposed to act through recruitment and/or stabilization of the Ubl-conjugating enzyme (E2) at the E3:substrate complex.</text>
</comment>
<comment type="subunit">
    <text evidence="1 6">Interacts with DTNA (By similarity). Interacts with TRIM28.</text>
</comment>
<comment type="interaction">
    <interactant intactId="EBI-949966">
        <id>Q9HCI5</id>
    </interactant>
    <interactant intactId="EBI-724968">
        <id>Q96D98</id>
        <label>EID2B</label>
    </interactant>
    <organismsDiffer>false</organismsDiffer>
    <experiments>6</experiments>
</comment>
<comment type="interaction">
    <interactant intactId="EBI-949966">
        <id>Q9HCI5</id>
    </interactant>
    <interactant intactId="EBI-307531">
        <id>P23508</id>
        <label>MCC</label>
    </interactant>
    <organismsDiffer>false</organismsDiffer>
    <experiments>6</experiments>
</comment>
<comment type="interaction">
    <interactant intactId="EBI-949966">
        <id>Q9HCI5</id>
    </interactant>
    <interactant intactId="EBI-78139">
        <id>Q13263</id>
        <label>TRIM28</label>
    </interactant>
    <organismsDiffer>false</organismsDiffer>
    <experiments>2</experiments>
</comment>
<comment type="interaction">
    <interactant intactId="EBI-949966">
        <id>Q9HCI5</id>
    </interactant>
    <interactant intactId="EBI-302474">
        <id>Q93009</id>
        <label>USP7</label>
    </interactant>
    <organismsDiffer>false</organismsDiffer>
    <experiments>2</experiments>
</comment>
<comment type="subcellular location">
    <subcellularLocation>
        <location evidence="1">Cytoplasm</location>
        <location evidence="1">Perinuclear region</location>
    </subcellularLocation>
    <subcellularLocation>
        <location evidence="1">Nucleus</location>
    </subcellularLocation>
    <subcellularLocation>
        <location evidence="1">Cell membrane</location>
    </subcellularLocation>
    <text evidence="1">In the skeletal muscle, found at the postsynaptic membrane and is associated with a subset of myonuclei. May reside within nuclei and/or in perinuclear compartments. In peripheral nerves, colocalizes with DTNA in the Schwann cell membrane (By similarity).</text>
</comment>
<comment type="sequence caution" evidence="8">
    <conflict type="erroneous initiation">
        <sequence resource="EMBL-CDS" id="BAB13413"/>
    </conflict>
    <text>Extended N-terminus.</text>
</comment>
<name>MAGE1_HUMAN</name>
<evidence type="ECO:0000250" key="1"/>
<evidence type="ECO:0000255" key="2">
    <source>
        <dbReference type="PROSITE-ProRule" id="PRU00127"/>
    </source>
</evidence>
<evidence type="ECO:0000256" key="3">
    <source>
        <dbReference type="SAM" id="MobiDB-lite"/>
    </source>
</evidence>
<evidence type="ECO:0000269" key="4">
    <source>
    </source>
</evidence>
<evidence type="ECO:0000269" key="5">
    <source>
    </source>
</evidence>
<evidence type="ECO:0000269" key="6">
    <source>
    </source>
</evidence>
<evidence type="ECO:0000269" key="7">
    <source>
    </source>
</evidence>
<evidence type="ECO:0000305" key="8"/>
<dbReference type="EMBL" id="AF490507">
    <property type="protein sequence ID" value="AAM08354.1"/>
    <property type="molecule type" value="mRNA"/>
</dbReference>
<dbReference type="EMBL" id="AB046807">
    <property type="protein sequence ID" value="BAB13413.1"/>
    <property type="status" value="ALT_INIT"/>
    <property type="molecule type" value="mRNA"/>
</dbReference>
<dbReference type="EMBL" id="AK291270">
    <property type="protein sequence ID" value="BAF83959.1"/>
    <property type="molecule type" value="mRNA"/>
</dbReference>
<dbReference type="EMBL" id="AL096827">
    <property type="protein sequence ID" value="CAI42970.1"/>
    <property type="molecule type" value="Genomic_DNA"/>
</dbReference>
<dbReference type="EMBL" id="CH471104">
    <property type="protein sequence ID" value="EAW98620.1"/>
    <property type="molecule type" value="Genomic_DNA"/>
</dbReference>
<dbReference type="EMBL" id="BC050588">
    <property type="protein sequence ID" value="AAH50588.1"/>
    <property type="molecule type" value="mRNA"/>
</dbReference>
<dbReference type="EMBL" id="AF320909">
    <property type="protein sequence ID" value="AAG38605.1"/>
    <property type="molecule type" value="mRNA"/>
</dbReference>
<dbReference type="CCDS" id="CCDS14433.1"/>
<dbReference type="RefSeq" id="NP_065983.1">
    <property type="nucleotide sequence ID" value="NM_020932.3"/>
</dbReference>
<dbReference type="SMR" id="Q9HCI5"/>
<dbReference type="BioGRID" id="121718">
    <property type="interactions" value="37"/>
</dbReference>
<dbReference type="FunCoup" id="Q9HCI5">
    <property type="interactions" value="57"/>
</dbReference>
<dbReference type="IntAct" id="Q9HCI5">
    <property type="interactions" value="28"/>
</dbReference>
<dbReference type="STRING" id="9606.ENSP00000354912"/>
<dbReference type="BindingDB" id="Q9HCI5"/>
<dbReference type="GlyGen" id="Q9HCI5">
    <property type="glycosylation" value="12 sites, 1 O-linked glycan (1 site)"/>
</dbReference>
<dbReference type="iPTMnet" id="Q9HCI5"/>
<dbReference type="PhosphoSitePlus" id="Q9HCI5"/>
<dbReference type="BioMuta" id="MAGEE1"/>
<dbReference type="DMDM" id="50428953"/>
<dbReference type="MassIVE" id="Q9HCI5"/>
<dbReference type="PaxDb" id="9606-ENSP00000354912"/>
<dbReference type="PeptideAtlas" id="Q9HCI5"/>
<dbReference type="ProteomicsDB" id="81730"/>
<dbReference type="Antibodypedia" id="560">
    <property type="antibodies" value="63 antibodies from 20 providers"/>
</dbReference>
<dbReference type="DNASU" id="57692"/>
<dbReference type="Ensembl" id="ENST00000361470.4">
    <property type="protein sequence ID" value="ENSP00000354912.2"/>
    <property type="gene ID" value="ENSG00000198934.5"/>
</dbReference>
<dbReference type="GeneID" id="57692"/>
<dbReference type="KEGG" id="hsa:57692"/>
<dbReference type="MANE-Select" id="ENST00000361470.4">
    <property type="protein sequence ID" value="ENSP00000354912.2"/>
    <property type="RefSeq nucleotide sequence ID" value="NM_020932.3"/>
    <property type="RefSeq protein sequence ID" value="NP_065983.1"/>
</dbReference>
<dbReference type="UCSC" id="uc004ecm.3">
    <property type="organism name" value="human"/>
</dbReference>
<dbReference type="AGR" id="HGNC:24934"/>
<dbReference type="CTD" id="57692"/>
<dbReference type="DisGeNET" id="57692"/>
<dbReference type="GeneCards" id="MAGEE1"/>
<dbReference type="HGNC" id="HGNC:24934">
    <property type="gene designation" value="MAGEE1"/>
</dbReference>
<dbReference type="HPA" id="ENSG00000198934">
    <property type="expression patterns" value="Tissue enriched (brain)"/>
</dbReference>
<dbReference type="MIM" id="300759">
    <property type="type" value="gene"/>
</dbReference>
<dbReference type="neXtProt" id="NX_Q9HCI5"/>
<dbReference type="OpenTargets" id="ENSG00000198934"/>
<dbReference type="PharmGKB" id="PA164741999"/>
<dbReference type="VEuPathDB" id="HostDB:ENSG00000198934"/>
<dbReference type="eggNOG" id="KOG4562">
    <property type="taxonomic scope" value="Eukaryota"/>
</dbReference>
<dbReference type="GeneTree" id="ENSGT00940000163182"/>
<dbReference type="HOGENOM" id="CLU_012911_0_0_1"/>
<dbReference type="InParanoid" id="Q9HCI5"/>
<dbReference type="OMA" id="CTPVEYE"/>
<dbReference type="OrthoDB" id="205198at2759"/>
<dbReference type="PAN-GO" id="Q9HCI5">
    <property type="GO annotations" value="2 GO annotations based on evolutionary models"/>
</dbReference>
<dbReference type="PhylomeDB" id="Q9HCI5"/>
<dbReference type="TreeFam" id="TF328505"/>
<dbReference type="PathwayCommons" id="Q9HCI5"/>
<dbReference type="SignaLink" id="Q9HCI5"/>
<dbReference type="BioGRID-ORCS" id="57692">
    <property type="hits" value="11 hits in 770 CRISPR screens"/>
</dbReference>
<dbReference type="GenomeRNAi" id="57692"/>
<dbReference type="Pharos" id="Q9HCI5">
    <property type="development level" value="Tbio"/>
</dbReference>
<dbReference type="PRO" id="PR:Q9HCI5"/>
<dbReference type="Proteomes" id="UP000005640">
    <property type="component" value="Chromosome X"/>
</dbReference>
<dbReference type="RNAct" id="Q9HCI5">
    <property type="molecule type" value="protein"/>
</dbReference>
<dbReference type="Bgee" id="ENSG00000198934">
    <property type="expression patterns" value="Expressed in endothelial cell and 178 other cell types or tissues"/>
</dbReference>
<dbReference type="GO" id="GO:0030425">
    <property type="term" value="C:dendrite"/>
    <property type="evidence" value="ECO:0000250"/>
    <property type="project" value="UniProtKB"/>
</dbReference>
<dbReference type="GO" id="GO:0005634">
    <property type="term" value="C:nucleus"/>
    <property type="evidence" value="ECO:0000250"/>
    <property type="project" value="UniProtKB"/>
</dbReference>
<dbReference type="GO" id="GO:0048471">
    <property type="term" value="C:perinuclear region of cytoplasm"/>
    <property type="evidence" value="ECO:0000250"/>
    <property type="project" value="UniProtKB"/>
</dbReference>
<dbReference type="GO" id="GO:0005886">
    <property type="term" value="C:plasma membrane"/>
    <property type="evidence" value="ECO:0000250"/>
    <property type="project" value="UniProtKB"/>
</dbReference>
<dbReference type="GO" id="GO:0045211">
    <property type="term" value="C:postsynaptic membrane"/>
    <property type="evidence" value="ECO:0000250"/>
    <property type="project" value="UniProtKB"/>
</dbReference>
<dbReference type="GO" id="GO:0000122">
    <property type="term" value="P:negative regulation of transcription by RNA polymerase II"/>
    <property type="evidence" value="ECO:0000318"/>
    <property type="project" value="GO_Central"/>
</dbReference>
<dbReference type="FunFam" id="1.10.10.1210:FF:000001">
    <property type="entry name" value="melanoma-associated antigen D1"/>
    <property type="match status" value="1"/>
</dbReference>
<dbReference type="FunFam" id="1.10.10.1200:FF:000004">
    <property type="entry name" value="Melanoma-associated antigen E1"/>
    <property type="match status" value="1"/>
</dbReference>
<dbReference type="FunFam" id="1.10.10.1200:FF:000006">
    <property type="entry name" value="Melanoma-associated antigen E1"/>
    <property type="match status" value="1"/>
</dbReference>
<dbReference type="FunFam" id="1.10.10.1210:FF:000002">
    <property type="entry name" value="melanoma-associated antigen E1"/>
    <property type="match status" value="1"/>
</dbReference>
<dbReference type="Gene3D" id="1.10.10.1200">
    <property type="entry name" value="MAGE homology domain, winged helix WH1 motif"/>
    <property type="match status" value="2"/>
</dbReference>
<dbReference type="Gene3D" id="1.10.10.1210">
    <property type="entry name" value="MAGE homology domain, winged helix WH2 motif"/>
    <property type="match status" value="2"/>
</dbReference>
<dbReference type="InterPro" id="IPR037445">
    <property type="entry name" value="MAGE"/>
</dbReference>
<dbReference type="InterPro" id="IPR041898">
    <property type="entry name" value="MAGE_WH1"/>
</dbReference>
<dbReference type="InterPro" id="IPR041899">
    <property type="entry name" value="MAGE_WH2"/>
</dbReference>
<dbReference type="InterPro" id="IPR002190">
    <property type="entry name" value="MHD_dom"/>
</dbReference>
<dbReference type="PANTHER" id="PTHR11736:SF9">
    <property type="entry name" value="MELANOMA-ASSOCIATED ANTIGEN E1"/>
    <property type="match status" value="1"/>
</dbReference>
<dbReference type="PANTHER" id="PTHR11736">
    <property type="entry name" value="MELANOMA-ASSOCIATED ANTIGEN MAGE ANTIGEN"/>
    <property type="match status" value="1"/>
</dbReference>
<dbReference type="Pfam" id="PF01454">
    <property type="entry name" value="MAGE"/>
    <property type="match status" value="2"/>
</dbReference>
<dbReference type="SMART" id="SM01373">
    <property type="entry name" value="MAGE"/>
    <property type="match status" value="2"/>
</dbReference>
<dbReference type="PROSITE" id="PS50838">
    <property type="entry name" value="MAGE"/>
    <property type="match status" value="2"/>
</dbReference>
<keyword id="KW-1003">Cell membrane</keyword>
<keyword id="KW-0963">Cytoplasm</keyword>
<keyword id="KW-0472">Membrane</keyword>
<keyword id="KW-0539">Nucleus</keyword>
<keyword id="KW-1267">Proteomics identification</keyword>
<keyword id="KW-1185">Reference proteome</keyword>
<keyword id="KW-0677">Repeat</keyword>
<keyword id="KW-0825">Tumor antigen</keyword>
<keyword id="KW-0833">Ubl conjugation pathway</keyword>
<feature type="chain" id="PRO_0000156729" description="Melanoma-associated antigen E1">
    <location>
        <begin position="1"/>
        <end position="957"/>
    </location>
</feature>
<feature type="domain" description="MAGE 1" evidence="2">
    <location>
        <begin position="491"/>
        <end position="690"/>
    </location>
</feature>
<feature type="domain" description="MAGE 2" evidence="2">
    <location>
        <begin position="745"/>
        <end position="936"/>
    </location>
</feature>
<feature type="region of interest" description="Disordered" evidence="3">
    <location>
        <begin position="1"/>
        <end position="455"/>
    </location>
</feature>
<feature type="region of interest" description="Interaction with DTNA" evidence="1">
    <location>
        <begin position="743"/>
        <end position="957"/>
    </location>
</feature>
<feature type="compositionally biased region" description="Polar residues" evidence="3">
    <location>
        <begin position="85"/>
        <end position="96"/>
    </location>
</feature>
<feature type="compositionally biased region" description="Polar residues" evidence="3">
    <location>
        <begin position="104"/>
        <end position="130"/>
    </location>
</feature>
<feature type="compositionally biased region" description="Low complexity" evidence="3">
    <location>
        <begin position="138"/>
        <end position="162"/>
    </location>
</feature>
<feature type="compositionally biased region" description="Polar residues" evidence="3">
    <location>
        <begin position="219"/>
        <end position="244"/>
    </location>
</feature>
<feature type="compositionally biased region" description="Polar residues" evidence="3">
    <location>
        <begin position="268"/>
        <end position="320"/>
    </location>
</feature>
<feature type="compositionally biased region" description="Polar residues" evidence="3">
    <location>
        <begin position="329"/>
        <end position="344"/>
    </location>
</feature>
<feature type="compositionally biased region" description="Polar residues" evidence="3">
    <location>
        <begin position="364"/>
        <end position="380"/>
    </location>
</feature>
<feature type="compositionally biased region" description="Polar residues" evidence="3">
    <location>
        <begin position="414"/>
        <end position="428"/>
    </location>
</feature>
<feature type="sequence variant" id="VAR_076263" description="In dbSNP:rs142080557." evidence="7">
    <original>S</original>
    <variation>C</variation>
    <location>
        <position position="305"/>
    </location>
</feature>
<feature type="sequence variant" id="VAR_060071" description="In dbSNP:rs7051260." evidence="4">
    <original>E</original>
    <variation>D</variation>
    <location>
        <position position="339"/>
    </location>
</feature>
<feature type="sequence variant" id="VAR_036585" description="In a breast cancer sample; somatic mutation." evidence="5">
    <original>Y</original>
    <variation>F</variation>
    <location>
        <position position="640"/>
    </location>
</feature>
<feature type="sequence variant" id="VAR_036586" description="In a breast cancer sample; somatic mutation." evidence="5">
    <original>T</original>
    <variation>N</variation>
    <location>
        <position position="664"/>
    </location>
</feature>
<accession>Q9HCI5</accession>
<accession>Q5JXC7</accession>
<accession>Q86TG0</accession>
<accession>Q8TD92</accession>
<accession>Q9H216</accession>
<gene>
    <name type="primary">MAGEE1</name>
    <name type="synonym">HCA1</name>
    <name type="synonym">KIAA1587</name>
</gene>
<organism>
    <name type="scientific">Homo sapiens</name>
    <name type="common">Human</name>
    <dbReference type="NCBI Taxonomy" id="9606"/>
    <lineage>
        <taxon>Eukaryota</taxon>
        <taxon>Metazoa</taxon>
        <taxon>Chordata</taxon>
        <taxon>Craniata</taxon>
        <taxon>Vertebrata</taxon>
        <taxon>Euteleostomi</taxon>
        <taxon>Mammalia</taxon>
        <taxon>Eutheria</taxon>
        <taxon>Euarchontoglires</taxon>
        <taxon>Primates</taxon>
        <taxon>Haplorrhini</taxon>
        <taxon>Catarrhini</taxon>
        <taxon>Hominidae</taxon>
        <taxon>Homo</taxon>
    </lineage>
</organism>
<proteinExistence type="evidence at protein level"/>